<name>YBEY_DESHY</name>
<evidence type="ECO:0000255" key="1">
    <source>
        <dbReference type="HAMAP-Rule" id="MF_00009"/>
    </source>
</evidence>
<protein>
    <recommendedName>
        <fullName evidence="1">Endoribonuclease YbeY</fullName>
        <ecNumber evidence="1">3.1.-.-</ecNumber>
    </recommendedName>
</protein>
<feature type="chain" id="PRO_0000284199" description="Endoribonuclease YbeY">
    <location>
        <begin position="1"/>
        <end position="157"/>
    </location>
</feature>
<feature type="binding site" evidence="1">
    <location>
        <position position="123"/>
    </location>
    <ligand>
        <name>Zn(2+)</name>
        <dbReference type="ChEBI" id="CHEBI:29105"/>
        <note>catalytic</note>
    </ligand>
</feature>
<feature type="binding site" evidence="1">
    <location>
        <position position="127"/>
    </location>
    <ligand>
        <name>Zn(2+)</name>
        <dbReference type="ChEBI" id="CHEBI:29105"/>
        <note>catalytic</note>
    </ligand>
</feature>
<feature type="binding site" evidence="1">
    <location>
        <position position="133"/>
    </location>
    <ligand>
        <name>Zn(2+)</name>
        <dbReference type="ChEBI" id="CHEBI:29105"/>
        <note>catalytic</note>
    </ligand>
</feature>
<keyword id="KW-0963">Cytoplasm</keyword>
<keyword id="KW-0255">Endonuclease</keyword>
<keyword id="KW-0378">Hydrolase</keyword>
<keyword id="KW-0479">Metal-binding</keyword>
<keyword id="KW-0540">Nuclease</keyword>
<keyword id="KW-1185">Reference proteome</keyword>
<keyword id="KW-0690">Ribosome biogenesis</keyword>
<keyword id="KW-0698">rRNA processing</keyword>
<keyword id="KW-0862">Zinc</keyword>
<comment type="function">
    <text evidence="1">Single strand-specific metallo-endoribonuclease involved in late-stage 70S ribosome quality control and in maturation of the 3' terminus of the 16S rRNA.</text>
</comment>
<comment type="cofactor">
    <cofactor evidence="1">
        <name>Zn(2+)</name>
        <dbReference type="ChEBI" id="CHEBI:29105"/>
    </cofactor>
    <text evidence="1">Binds 1 zinc ion.</text>
</comment>
<comment type="subcellular location">
    <subcellularLocation>
        <location evidence="1">Cytoplasm</location>
    </subcellularLocation>
</comment>
<comment type="similarity">
    <text evidence="1">Belongs to the endoribonuclease YbeY family.</text>
</comment>
<reference key="1">
    <citation type="journal article" date="2006" name="J. Bacteriol.">
        <title>Complete genome sequence of the dehalorespiring bacterium Desulfitobacterium hafniense Y51 and comparison with Dehalococcoides ethenogenes 195.</title>
        <authorList>
            <person name="Nonaka H."/>
            <person name="Keresztes G."/>
            <person name="Shinoda Y."/>
            <person name="Ikenaga Y."/>
            <person name="Abe M."/>
            <person name="Naito K."/>
            <person name="Inatomi K."/>
            <person name="Furukawa K."/>
            <person name="Inui M."/>
            <person name="Yukawa H."/>
        </authorList>
    </citation>
    <scope>NUCLEOTIDE SEQUENCE [LARGE SCALE GENOMIC DNA]</scope>
    <source>
        <strain>Y51</strain>
    </source>
</reference>
<dbReference type="EC" id="3.1.-.-" evidence="1"/>
<dbReference type="EMBL" id="AP008230">
    <property type="protein sequence ID" value="BAE84898.1"/>
    <property type="molecule type" value="Genomic_DNA"/>
</dbReference>
<dbReference type="RefSeq" id="WP_005816440.1">
    <property type="nucleotide sequence ID" value="NC_007907.1"/>
</dbReference>
<dbReference type="SMR" id="Q24SU4"/>
<dbReference type="STRING" id="138119.DSY3109"/>
<dbReference type="KEGG" id="dsy:DSY3109"/>
<dbReference type="eggNOG" id="COG0319">
    <property type="taxonomic scope" value="Bacteria"/>
</dbReference>
<dbReference type="HOGENOM" id="CLU_106710_3_0_9"/>
<dbReference type="Proteomes" id="UP000001946">
    <property type="component" value="Chromosome"/>
</dbReference>
<dbReference type="GO" id="GO:0005737">
    <property type="term" value="C:cytoplasm"/>
    <property type="evidence" value="ECO:0007669"/>
    <property type="project" value="UniProtKB-SubCell"/>
</dbReference>
<dbReference type="GO" id="GO:0004222">
    <property type="term" value="F:metalloendopeptidase activity"/>
    <property type="evidence" value="ECO:0007669"/>
    <property type="project" value="InterPro"/>
</dbReference>
<dbReference type="GO" id="GO:0004521">
    <property type="term" value="F:RNA endonuclease activity"/>
    <property type="evidence" value="ECO:0007669"/>
    <property type="project" value="UniProtKB-UniRule"/>
</dbReference>
<dbReference type="GO" id="GO:0008270">
    <property type="term" value="F:zinc ion binding"/>
    <property type="evidence" value="ECO:0007669"/>
    <property type="project" value="UniProtKB-UniRule"/>
</dbReference>
<dbReference type="GO" id="GO:0006364">
    <property type="term" value="P:rRNA processing"/>
    <property type="evidence" value="ECO:0007669"/>
    <property type="project" value="UniProtKB-UniRule"/>
</dbReference>
<dbReference type="Gene3D" id="3.40.390.30">
    <property type="entry name" value="Metalloproteases ('zincins'), catalytic domain"/>
    <property type="match status" value="1"/>
</dbReference>
<dbReference type="HAMAP" id="MF_00009">
    <property type="entry name" value="Endoribonucl_YbeY"/>
    <property type="match status" value="1"/>
</dbReference>
<dbReference type="InterPro" id="IPR023091">
    <property type="entry name" value="MetalPrtase_cat_dom_sf_prd"/>
</dbReference>
<dbReference type="InterPro" id="IPR002036">
    <property type="entry name" value="YbeY"/>
</dbReference>
<dbReference type="InterPro" id="IPR020549">
    <property type="entry name" value="YbeY_CS"/>
</dbReference>
<dbReference type="NCBIfam" id="TIGR00043">
    <property type="entry name" value="rRNA maturation RNase YbeY"/>
    <property type="match status" value="1"/>
</dbReference>
<dbReference type="PANTHER" id="PTHR46986">
    <property type="entry name" value="ENDORIBONUCLEASE YBEY, CHLOROPLASTIC"/>
    <property type="match status" value="1"/>
</dbReference>
<dbReference type="PANTHER" id="PTHR46986:SF1">
    <property type="entry name" value="ENDORIBONUCLEASE YBEY, CHLOROPLASTIC"/>
    <property type="match status" value="1"/>
</dbReference>
<dbReference type="Pfam" id="PF02130">
    <property type="entry name" value="YbeY"/>
    <property type="match status" value="1"/>
</dbReference>
<dbReference type="SUPFAM" id="SSF55486">
    <property type="entry name" value="Metalloproteases ('zincins'), catalytic domain"/>
    <property type="match status" value="1"/>
</dbReference>
<dbReference type="PROSITE" id="PS01306">
    <property type="entry name" value="UPF0054"/>
    <property type="match status" value="1"/>
</dbReference>
<organism>
    <name type="scientific">Desulfitobacterium hafniense (strain Y51)</name>
    <dbReference type="NCBI Taxonomy" id="138119"/>
    <lineage>
        <taxon>Bacteria</taxon>
        <taxon>Bacillati</taxon>
        <taxon>Bacillota</taxon>
        <taxon>Clostridia</taxon>
        <taxon>Eubacteriales</taxon>
        <taxon>Desulfitobacteriaceae</taxon>
        <taxon>Desulfitobacterium</taxon>
    </lineage>
</organism>
<accession>Q24SU4</accession>
<sequence length="157" mass="17991">MYLDINWEEDSIPENERGSLTGLLEQGIAKAVHLSAESEEAEVSLTLVDDARIHELNRDYRGVDRPTDVLSFALQEERSDEPDILDYEDHLLGDIIISVERARAQAIDYGHSFERELVYLAVHGTLHLLGYDHMEEADKEKMRRQEEAVMSQIGLLR</sequence>
<proteinExistence type="inferred from homology"/>
<gene>
    <name evidence="1" type="primary">ybeY</name>
    <name type="ordered locus">DSY3109</name>
</gene>